<feature type="chain" id="PRO_0000110707" description="Orotate phosphoribosyltransferase">
    <location>
        <begin position="1"/>
        <end position="209"/>
    </location>
</feature>
<feature type="binding site" evidence="1">
    <location>
        <position position="96"/>
    </location>
    <ligand>
        <name>5-phospho-alpha-D-ribose 1-diphosphate</name>
        <dbReference type="ChEBI" id="CHEBI:58017"/>
        <note>ligand shared between dimeric partners</note>
    </ligand>
</feature>
<feature type="binding site" evidence="1">
    <location>
        <position position="100"/>
    </location>
    <ligand>
        <name>5-phospho-alpha-D-ribose 1-diphosphate</name>
        <dbReference type="ChEBI" id="CHEBI:58017"/>
        <note>ligand shared between dimeric partners</note>
    </ligand>
</feature>
<feature type="binding site" evidence="1">
    <location>
        <position position="102"/>
    </location>
    <ligand>
        <name>5-phospho-alpha-D-ribose 1-diphosphate</name>
        <dbReference type="ChEBI" id="CHEBI:58017"/>
        <note>ligand shared between dimeric partners</note>
    </ligand>
</feature>
<feature type="binding site" description="in other chain" evidence="1">
    <location>
        <begin position="122"/>
        <end position="130"/>
    </location>
    <ligand>
        <name>5-phospho-alpha-D-ribose 1-diphosphate</name>
        <dbReference type="ChEBI" id="CHEBI:58017"/>
        <note>ligand shared between dimeric partners</note>
    </ligand>
</feature>
<feature type="binding site" evidence="1">
    <location>
        <position position="126"/>
    </location>
    <ligand>
        <name>orotate</name>
        <dbReference type="ChEBI" id="CHEBI:30839"/>
    </ligand>
</feature>
<sequence>MSIEKQVAEQLLEIKAVFLKPNEPFTWASGIKSPIYCDNRLTLGFPKVRQFIAKSLAEKIKQTFGEVDVVAGTATAGIPHAAWVSDLLDLPMVYVRSKAKEHGKGNQIEGPISKGQKVVVIEDLISTGGSSLKAVEALEEAGAEVVGIAAIFTYGLAKGKQLLEESGTKLVTLTNYDELIEVALNENYVTGEDMETLKEWKKNPENWGK</sequence>
<organism>
    <name type="scientific">Listeria monocytogenes serotype 4b (strain F2365)</name>
    <dbReference type="NCBI Taxonomy" id="265669"/>
    <lineage>
        <taxon>Bacteria</taxon>
        <taxon>Bacillati</taxon>
        <taxon>Bacillota</taxon>
        <taxon>Bacilli</taxon>
        <taxon>Bacillales</taxon>
        <taxon>Listeriaceae</taxon>
        <taxon>Listeria</taxon>
    </lineage>
</organism>
<evidence type="ECO:0000255" key="1">
    <source>
        <dbReference type="HAMAP-Rule" id="MF_01208"/>
    </source>
</evidence>
<name>PYRE_LISMF</name>
<gene>
    <name evidence="1" type="primary">pyrE</name>
    <name type="ordered locus">LMOf2365_1859</name>
</gene>
<reference key="1">
    <citation type="journal article" date="2004" name="Nucleic Acids Res.">
        <title>Whole genome comparisons of serotype 4b and 1/2a strains of the food-borne pathogen Listeria monocytogenes reveal new insights into the core genome components of this species.</title>
        <authorList>
            <person name="Nelson K.E."/>
            <person name="Fouts D.E."/>
            <person name="Mongodin E.F."/>
            <person name="Ravel J."/>
            <person name="DeBoy R.T."/>
            <person name="Kolonay J.F."/>
            <person name="Rasko D.A."/>
            <person name="Angiuoli S.V."/>
            <person name="Gill S.R."/>
            <person name="Paulsen I.T."/>
            <person name="Peterson J.D."/>
            <person name="White O."/>
            <person name="Nelson W.C."/>
            <person name="Nierman W.C."/>
            <person name="Beanan M.J."/>
            <person name="Brinkac L.M."/>
            <person name="Daugherty S.C."/>
            <person name="Dodson R.J."/>
            <person name="Durkin A.S."/>
            <person name="Madupu R."/>
            <person name="Haft D.H."/>
            <person name="Selengut J."/>
            <person name="Van Aken S.E."/>
            <person name="Khouri H.M."/>
            <person name="Fedorova N."/>
            <person name="Forberger H.A."/>
            <person name="Tran B."/>
            <person name="Kathariou S."/>
            <person name="Wonderling L.D."/>
            <person name="Uhlich G.A."/>
            <person name="Bayles D.O."/>
            <person name="Luchansky J.B."/>
            <person name="Fraser C.M."/>
        </authorList>
    </citation>
    <scope>NUCLEOTIDE SEQUENCE [LARGE SCALE GENOMIC DNA]</scope>
    <source>
        <strain>F2365</strain>
    </source>
</reference>
<protein>
    <recommendedName>
        <fullName evidence="1">Orotate phosphoribosyltransferase</fullName>
        <shortName evidence="1">OPRT</shortName>
        <shortName evidence="1">OPRTase</shortName>
        <ecNumber evidence="1">2.4.2.10</ecNumber>
    </recommendedName>
</protein>
<accession>Q71YI5</accession>
<keyword id="KW-0328">Glycosyltransferase</keyword>
<keyword id="KW-0460">Magnesium</keyword>
<keyword id="KW-0665">Pyrimidine biosynthesis</keyword>
<keyword id="KW-0808">Transferase</keyword>
<proteinExistence type="inferred from homology"/>
<comment type="function">
    <text evidence="1">Catalyzes the transfer of a ribosyl phosphate group from 5-phosphoribose 1-diphosphate to orotate, leading to the formation of orotidine monophosphate (OMP).</text>
</comment>
<comment type="catalytic activity">
    <reaction evidence="1">
        <text>orotidine 5'-phosphate + diphosphate = orotate + 5-phospho-alpha-D-ribose 1-diphosphate</text>
        <dbReference type="Rhea" id="RHEA:10380"/>
        <dbReference type="ChEBI" id="CHEBI:30839"/>
        <dbReference type="ChEBI" id="CHEBI:33019"/>
        <dbReference type="ChEBI" id="CHEBI:57538"/>
        <dbReference type="ChEBI" id="CHEBI:58017"/>
        <dbReference type="EC" id="2.4.2.10"/>
    </reaction>
</comment>
<comment type="cofactor">
    <cofactor evidence="1">
        <name>Mg(2+)</name>
        <dbReference type="ChEBI" id="CHEBI:18420"/>
    </cofactor>
</comment>
<comment type="pathway">
    <text evidence="1">Pyrimidine metabolism; UMP biosynthesis via de novo pathway; UMP from orotate: step 1/2.</text>
</comment>
<comment type="subunit">
    <text evidence="1">Homodimer.</text>
</comment>
<comment type="similarity">
    <text evidence="1">Belongs to the purine/pyrimidine phosphoribosyltransferase family. PyrE subfamily.</text>
</comment>
<dbReference type="EC" id="2.4.2.10" evidence="1"/>
<dbReference type="EMBL" id="AE017262">
    <property type="protein sequence ID" value="AAT04629.1"/>
    <property type="molecule type" value="Genomic_DNA"/>
</dbReference>
<dbReference type="RefSeq" id="WP_003725663.1">
    <property type="nucleotide sequence ID" value="NC_002973.6"/>
</dbReference>
<dbReference type="SMR" id="Q71YI5"/>
<dbReference type="KEGG" id="lmf:LMOf2365_1859"/>
<dbReference type="HOGENOM" id="CLU_074878_1_1_9"/>
<dbReference type="UniPathway" id="UPA00070">
    <property type="reaction ID" value="UER00119"/>
</dbReference>
<dbReference type="GO" id="GO:0000287">
    <property type="term" value="F:magnesium ion binding"/>
    <property type="evidence" value="ECO:0007669"/>
    <property type="project" value="UniProtKB-UniRule"/>
</dbReference>
<dbReference type="GO" id="GO:0004588">
    <property type="term" value="F:orotate phosphoribosyltransferase activity"/>
    <property type="evidence" value="ECO:0007669"/>
    <property type="project" value="UniProtKB-UniRule"/>
</dbReference>
<dbReference type="GO" id="GO:0044205">
    <property type="term" value="P:'de novo' UMP biosynthetic process"/>
    <property type="evidence" value="ECO:0007669"/>
    <property type="project" value="UniProtKB-UniRule"/>
</dbReference>
<dbReference type="GO" id="GO:0019856">
    <property type="term" value="P:pyrimidine nucleobase biosynthetic process"/>
    <property type="evidence" value="ECO:0007669"/>
    <property type="project" value="TreeGrafter"/>
</dbReference>
<dbReference type="CDD" id="cd06223">
    <property type="entry name" value="PRTases_typeI"/>
    <property type="match status" value="1"/>
</dbReference>
<dbReference type="Gene3D" id="3.40.50.2020">
    <property type="match status" value="1"/>
</dbReference>
<dbReference type="HAMAP" id="MF_01208">
    <property type="entry name" value="PyrE"/>
    <property type="match status" value="1"/>
</dbReference>
<dbReference type="InterPro" id="IPR023031">
    <property type="entry name" value="OPRT"/>
</dbReference>
<dbReference type="InterPro" id="IPR004467">
    <property type="entry name" value="Or_phspho_trans_dom"/>
</dbReference>
<dbReference type="InterPro" id="IPR000836">
    <property type="entry name" value="PRibTrfase_dom"/>
</dbReference>
<dbReference type="InterPro" id="IPR029057">
    <property type="entry name" value="PRTase-like"/>
</dbReference>
<dbReference type="NCBIfam" id="TIGR00336">
    <property type="entry name" value="pyrE"/>
    <property type="match status" value="1"/>
</dbReference>
<dbReference type="PANTHER" id="PTHR19278">
    <property type="entry name" value="OROTATE PHOSPHORIBOSYLTRANSFERASE"/>
    <property type="match status" value="1"/>
</dbReference>
<dbReference type="PANTHER" id="PTHR19278:SF9">
    <property type="entry name" value="URIDINE 5'-MONOPHOSPHATE SYNTHASE"/>
    <property type="match status" value="1"/>
</dbReference>
<dbReference type="Pfam" id="PF00156">
    <property type="entry name" value="Pribosyltran"/>
    <property type="match status" value="1"/>
</dbReference>
<dbReference type="SUPFAM" id="SSF53271">
    <property type="entry name" value="PRTase-like"/>
    <property type="match status" value="1"/>
</dbReference>
<dbReference type="PROSITE" id="PS00103">
    <property type="entry name" value="PUR_PYR_PR_TRANSFER"/>
    <property type="match status" value="1"/>
</dbReference>